<evidence type="ECO:0000255" key="1">
    <source>
        <dbReference type="HAMAP-Rule" id="MF_00127"/>
    </source>
</evidence>
<sequence>MAKPKKTPRPKAQTPKGFRDYFGTEVTERKAMLDKIAEVYHLYGFDPLETSAVETVEALGKFLPDVDRPNEGVFAWQEDDADWLALRYDLTAPLARVAAQYRNDLPSPYRRYAMGPVWRNEKPGPGRFRQFYQCDADTVGAPSVAADAEVCAMLATALEAVGIARGDYIVRVNNRKVLNGVFESAGLLDSEYLADNLKRVGIAIRAVDKFDRLGSDGVKALLGKGREDESGAFVEGANLAEWQIDRILGFATAKQSTELETLDRLTELVGNSDEGLQGVEELKHISDLLSAQGFGPDRIVIDPSVVRGLGYYTGPVFEAELTFEVQNDKGQTVQFGSVAGGGRYDDLVKRFTGQAVPATGVSIGVDRLLAALRAKGQAQTAAPGPVIVTVMDRDRIADYQAMVGTLRDAGIRAELYLGNPKNFGNQLKYADKRAAPVAVIQGSDEAARGVVQIKDLVLGAQIAESASLDEWKSQPAQREVPVADLVAEVQAILARGA</sequence>
<accession>A8LKA5</accession>
<organism>
    <name type="scientific">Dinoroseobacter shibae (strain DSM 16493 / NCIMB 14021 / DFL 12)</name>
    <dbReference type="NCBI Taxonomy" id="398580"/>
    <lineage>
        <taxon>Bacteria</taxon>
        <taxon>Pseudomonadati</taxon>
        <taxon>Pseudomonadota</taxon>
        <taxon>Alphaproteobacteria</taxon>
        <taxon>Rhodobacterales</taxon>
        <taxon>Roseobacteraceae</taxon>
        <taxon>Dinoroseobacter</taxon>
    </lineage>
</organism>
<protein>
    <recommendedName>
        <fullName evidence="1">Histidine--tRNA ligase</fullName>
        <ecNumber evidence="1">6.1.1.21</ecNumber>
    </recommendedName>
    <alternativeName>
        <fullName evidence="1">Histidyl-tRNA synthetase</fullName>
        <shortName evidence="1">HisRS</shortName>
    </alternativeName>
</protein>
<gene>
    <name evidence="1" type="primary">hisS</name>
    <name type="ordered locus">Dshi_2955</name>
</gene>
<comment type="catalytic activity">
    <reaction evidence="1">
        <text>tRNA(His) + L-histidine + ATP = L-histidyl-tRNA(His) + AMP + diphosphate + H(+)</text>
        <dbReference type="Rhea" id="RHEA:17313"/>
        <dbReference type="Rhea" id="RHEA-COMP:9665"/>
        <dbReference type="Rhea" id="RHEA-COMP:9689"/>
        <dbReference type="ChEBI" id="CHEBI:15378"/>
        <dbReference type="ChEBI" id="CHEBI:30616"/>
        <dbReference type="ChEBI" id="CHEBI:33019"/>
        <dbReference type="ChEBI" id="CHEBI:57595"/>
        <dbReference type="ChEBI" id="CHEBI:78442"/>
        <dbReference type="ChEBI" id="CHEBI:78527"/>
        <dbReference type="ChEBI" id="CHEBI:456215"/>
        <dbReference type="EC" id="6.1.1.21"/>
    </reaction>
</comment>
<comment type="subunit">
    <text evidence="1">Homodimer.</text>
</comment>
<comment type="subcellular location">
    <subcellularLocation>
        <location evidence="1">Cytoplasm</location>
    </subcellularLocation>
</comment>
<comment type="similarity">
    <text evidence="1">Belongs to the class-II aminoacyl-tRNA synthetase family.</text>
</comment>
<feature type="chain" id="PRO_1000076269" description="Histidine--tRNA ligase">
    <location>
        <begin position="1"/>
        <end position="497"/>
    </location>
</feature>
<dbReference type="EC" id="6.1.1.21" evidence="1"/>
<dbReference type="EMBL" id="CP000830">
    <property type="protein sequence ID" value="ABV94688.1"/>
    <property type="molecule type" value="Genomic_DNA"/>
</dbReference>
<dbReference type="RefSeq" id="WP_012179616.1">
    <property type="nucleotide sequence ID" value="NC_009952.1"/>
</dbReference>
<dbReference type="SMR" id="A8LKA5"/>
<dbReference type="STRING" id="398580.Dshi_2955"/>
<dbReference type="KEGG" id="dsh:Dshi_2955"/>
<dbReference type="eggNOG" id="COG0124">
    <property type="taxonomic scope" value="Bacteria"/>
</dbReference>
<dbReference type="HOGENOM" id="CLU_025113_3_2_5"/>
<dbReference type="OrthoDB" id="9800814at2"/>
<dbReference type="Proteomes" id="UP000006833">
    <property type="component" value="Chromosome"/>
</dbReference>
<dbReference type="GO" id="GO:0005737">
    <property type="term" value="C:cytoplasm"/>
    <property type="evidence" value="ECO:0007669"/>
    <property type="project" value="UniProtKB-SubCell"/>
</dbReference>
<dbReference type="GO" id="GO:0005524">
    <property type="term" value="F:ATP binding"/>
    <property type="evidence" value="ECO:0007669"/>
    <property type="project" value="UniProtKB-UniRule"/>
</dbReference>
<dbReference type="GO" id="GO:0004821">
    <property type="term" value="F:histidine-tRNA ligase activity"/>
    <property type="evidence" value="ECO:0007669"/>
    <property type="project" value="UniProtKB-UniRule"/>
</dbReference>
<dbReference type="GO" id="GO:0006427">
    <property type="term" value="P:histidyl-tRNA aminoacylation"/>
    <property type="evidence" value="ECO:0007669"/>
    <property type="project" value="UniProtKB-UniRule"/>
</dbReference>
<dbReference type="CDD" id="cd00773">
    <property type="entry name" value="HisRS-like_core"/>
    <property type="match status" value="1"/>
</dbReference>
<dbReference type="CDD" id="cd00859">
    <property type="entry name" value="HisRS_anticodon"/>
    <property type="match status" value="1"/>
</dbReference>
<dbReference type="Gene3D" id="3.40.50.800">
    <property type="entry name" value="Anticodon-binding domain"/>
    <property type="match status" value="1"/>
</dbReference>
<dbReference type="Gene3D" id="3.30.930.10">
    <property type="entry name" value="Bira Bifunctional Protein, Domain 2"/>
    <property type="match status" value="1"/>
</dbReference>
<dbReference type="HAMAP" id="MF_00127">
    <property type="entry name" value="His_tRNA_synth"/>
    <property type="match status" value="1"/>
</dbReference>
<dbReference type="InterPro" id="IPR006195">
    <property type="entry name" value="aa-tRNA-synth_II"/>
</dbReference>
<dbReference type="InterPro" id="IPR045864">
    <property type="entry name" value="aa-tRNA-synth_II/BPL/LPL"/>
</dbReference>
<dbReference type="InterPro" id="IPR004154">
    <property type="entry name" value="Anticodon-bd"/>
</dbReference>
<dbReference type="InterPro" id="IPR036621">
    <property type="entry name" value="Anticodon-bd_dom_sf"/>
</dbReference>
<dbReference type="InterPro" id="IPR015807">
    <property type="entry name" value="His-tRNA-ligase"/>
</dbReference>
<dbReference type="InterPro" id="IPR041715">
    <property type="entry name" value="HisRS-like_core"/>
</dbReference>
<dbReference type="InterPro" id="IPR004516">
    <property type="entry name" value="HisRS/HisZ"/>
</dbReference>
<dbReference type="InterPro" id="IPR033656">
    <property type="entry name" value="HisRS_anticodon"/>
</dbReference>
<dbReference type="NCBIfam" id="TIGR00442">
    <property type="entry name" value="hisS"/>
    <property type="match status" value="1"/>
</dbReference>
<dbReference type="PANTHER" id="PTHR11476:SF7">
    <property type="entry name" value="HISTIDINE--TRNA LIGASE"/>
    <property type="match status" value="1"/>
</dbReference>
<dbReference type="PANTHER" id="PTHR11476">
    <property type="entry name" value="HISTIDYL-TRNA SYNTHETASE"/>
    <property type="match status" value="1"/>
</dbReference>
<dbReference type="Pfam" id="PF03129">
    <property type="entry name" value="HGTP_anticodon"/>
    <property type="match status" value="1"/>
</dbReference>
<dbReference type="Pfam" id="PF13393">
    <property type="entry name" value="tRNA-synt_His"/>
    <property type="match status" value="1"/>
</dbReference>
<dbReference type="PIRSF" id="PIRSF001549">
    <property type="entry name" value="His-tRNA_synth"/>
    <property type="match status" value="1"/>
</dbReference>
<dbReference type="SUPFAM" id="SSF52954">
    <property type="entry name" value="Class II aaRS ABD-related"/>
    <property type="match status" value="1"/>
</dbReference>
<dbReference type="SUPFAM" id="SSF55681">
    <property type="entry name" value="Class II aaRS and biotin synthetases"/>
    <property type="match status" value="1"/>
</dbReference>
<dbReference type="PROSITE" id="PS50862">
    <property type="entry name" value="AA_TRNA_LIGASE_II"/>
    <property type="match status" value="1"/>
</dbReference>
<reference key="1">
    <citation type="journal article" date="2010" name="ISME J.">
        <title>The complete genome sequence of the algal symbiont Dinoroseobacter shibae: a hitchhiker's guide to life in the sea.</title>
        <authorList>
            <person name="Wagner-Dobler I."/>
            <person name="Ballhausen B."/>
            <person name="Berger M."/>
            <person name="Brinkhoff T."/>
            <person name="Buchholz I."/>
            <person name="Bunk B."/>
            <person name="Cypionka H."/>
            <person name="Daniel R."/>
            <person name="Drepper T."/>
            <person name="Gerdts G."/>
            <person name="Hahnke S."/>
            <person name="Han C."/>
            <person name="Jahn D."/>
            <person name="Kalhoefer D."/>
            <person name="Kiss H."/>
            <person name="Klenk H.P."/>
            <person name="Kyrpides N."/>
            <person name="Liebl W."/>
            <person name="Liesegang H."/>
            <person name="Meincke L."/>
            <person name="Pati A."/>
            <person name="Petersen J."/>
            <person name="Piekarski T."/>
            <person name="Pommerenke C."/>
            <person name="Pradella S."/>
            <person name="Pukall R."/>
            <person name="Rabus R."/>
            <person name="Stackebrandt E."/>
            <person name="Thole S."/>
            <person name="Thompson L."/>
            <person name="Tielen P."/>
            <person name="Tomasch J."/>
            <person name="von Jan M."/>
            <person name="Wanphrut N."/>
            <person name="Wichels A."/>
            <person name="Zech H."/>
            <person name="Simon M."/>
        </authorList>
    </citation>
    <scope>NUCLEOTIDE SEQUENCE [LARGE SCALE GENOMIC DNA]</scope>
    <source>
        <strain>DSM 16493 / NCIMB 14021 / DFL 12</strain>
    </source>
</reference>
<keyword id="KW-0030">Aminoacyl-tRNA synthetase</keyword>
<keyword id="KW-0067">ATP-binding</keyword>
<keyword id="KW-0963">Cytoplasm</keyword>
<keyword id="KW-0436">Ligase</keyword>
<keyword id="KW-0547">Nucleotide-binding</keyword>
<keyword id="KW-0648">Protein biosynthesis</keyword>
<keyword id="KW-1185">Reference proteome</keyword>
<proteinExistence type="inferred from homology"/>
<name>SYH_DINSH</name>